<dbReference type="EMBL" id="U27274">
    <property type="protein sequence ID" value="AAC59690.1"/>
    <property type="molecule type" value="mRNA"/>
</dbReference>
<dbReference type="EMBL" id="BC072752">
    <property type="protein sequence ID" value="AAH72752.1"/>
    <property type="molecule type" value="mRNA"/>
</dbReference>
<dbReference type="PIR" id="I51686">
    <property type="entry name" value="I51686"/>
</dbReference>
<dbReference type="RefSeq" id="NP_001084088.1">
    <property type="nucleotide sequence ID" value="NM_001090619.1"/>
</dbReference>
<dbReference type="SMR" id="Q91614"/>
<dbReference type="DNASU" id="399297"/>
<dbReference type="GeneID" id="399297"/>
<dbReference type="KEGG" id="xla:399297"/>
<dbReference type="AGR" id="Xenbase:XB-GENE-953746"/>
<dbReference type="CTD" id="399297"/>
<dbReference type="Xenbase" id="XB-GENE-953746">
    <property type="gene designation" value="ncs1.L"/>
</dbReference>
<dbReference type="OrthoDB" id="191686at2759"/>
<dbReference type="Proteomes" id="UP000186698">
    <property type="component" value="Chromosome 8L"/>
</dbReference>
<dbReference type="Bgee" id="399297">
    <property type="expression patterns" value="Expressed in brain and 17 other cell types or tissues"/>
</dbReference>
<dbReference type="GO" id="GO:0005794">
    <property type="term" value="C:Golgi apparatus"/>
    <property type="evidence" value="ECO:0007669"/>
    <property type="project" value="UniProtKB-SubCell"/>
</dbReference>
<dbReference type="GO" id="GO:0048471">
    <property type="term" value="C:perinuclear region of cytoplasm"/>
    <property type="evidence" value="ECO:0007669"/>
    <property type="project" value="UniProtKB-SubCell"/>
</dbReference>
<dbReference type="GO" id="GO:0005886">
    <property type="term" value="C:plasma membrane"/>
    <property type="evidence" value="ECO:0007669"/>
    <property type="project" value="UniProtKB-SubCell"/>
</dbReference>
<dbReference type="GO" id="GO:0014069">
    <property type="term" value="C:postsynaptic density"/>
    <property type="evidence" value="ECO:0007669"/>
    <property type="project" value="UniProtKB-SubCell"/>
</dbReference>
<dbReference type="GO" id="GO:0005509">
    <property type="term" value="F:calcium ion binding"/>
    <property type="evidence" value="ECO:0000318"/>
    <property type="project" value="GO_Central"/>
</dbReference>
<dbReference type="GO" id="GO:0008048">
    <property type="term" value="F:calcium sensitive guanylate cyclase activator activity"/>
    <property type="evidence" value="ECO:0000318"/>
    <property type="project" value="GO_Central"/>
</dbReference>
<dbReference type="GO" id="GO:0005245">
    <property type="term" value="F:voltage-gated calcium channel activity"/>
    <property type="evidence" value="ECO:0000250"/>
    <property type="project" value="UniProtKB"/>
</dbReference>
<dbReference type="GO" id="GO:0010975">
    <property type="term" value="P:regulation of neuron projection development"/>
    <property type="evidence" value="ECO:0000250"/>
    <property type="project" value="UniProtKB"/>
</dbReference>
<dbReference type="GO" id="GO:0009966">
    <property type="term" value="P:regulation of signal transduction"/>
    <property type="evidence" value="ECO:0000318"/>
    <property type="project" value="GO_Central"/>
</dbReference>
<dbReference type="CDD" id="cd00051">
    <property type="entry name" value="EFh"/>
    <property type="match status" value="2"/>
</dbReference>
<dbReference type="FunFam" id="1.10.238.10:FF:000009">
    <property type="entry name" value="Visinin-like protein 1"/>
    <property type="match status" value="1"/>
</dbReference>
<dbReference type="Gene3D" id="1.10.238.10">
    <property type="entry name" value="EF-hand"/>
    <property type="match status" value="1"/>
</dbReference>
<dbReference type="InterPro" id="IPR011992">
    <property type="entry name" value="EF-hand-dom_pair"/>
</dbReference>
<dbReference type="InterPro" id="IPR018247">
    <property type="entry name" value="EF_Hand_1_Ca_BS"/>
</dbReference>
<dbReference type="InterPro" id="IPR002048">
    <property type="entry name" value="EF_hand_dom"/>
</dbReference>
<dbReference type="InterPro" id="IPR028846">
    <property type="entry name" value="Recoverin"/>
</dbReference>
<dbReference type="PANTHER" id="PTHR23055">
    <property type="entry name" value="CALCIUM BINDING PROTEINS"/>
    <property type="match status" value="1"/>
</dbReference>
<dbReference type="PANTHER" id="PTHR23055:SF198">
    <property type="entry name" value="NEURONAL CALCIUM SENSOR 1"/>
    <property type="match status" value="1"/>
</dbReference>
<dbReference type="Pfam" id="PF00036">
    <property type="entry name" value="EF-hand_1"/>
    <property type="match status" value="1"/>
</dbReference>
<dbReference type="Pfam" id="PF13499">
    <property type="entry name" value="EF-hand_7"/>
    <property type="match status" value="1"/>
</dbReference>
<dbReference type="PRINTS" id="PR00450">
    <property type="entry name" value="RECOVERIN"/>
</dbReference>
<dbReference type="SMART" id="SM00054">
    <property type="entry name" value="EFh"/>
    <property type="match status" value="3"/>
</dbReference>
<dbReference type="SUPFAM" id="SSF47473">
    <property type="entry name" value="EF-hand"/>
    <property type="match status" value="1"/>
</dbReference>
<dbReference type="PROSITE" id="PS00018">
    <property type="entry name" value="EF_HAND_1"/>
    <property type="match status" value="3"/>
</dbReference>
<dbReference type="PROSITE" id="PS50222">
    <property type="entry name" value="EF_HAND_2"/>
    <property type="match status" value="3"/>
</dbReference>
<accession>Q91614</accession>
<accession>Q6GQJ0</accession>
<keyword id="KW-0106">Calcium</keyword>
<keyword id="KW-1003">Cell membrane</keyword>
<keyword id="KW-0963">Cytoplasm</keyword>
<keyword id="KW-0333">Golgi apparatus</keyword>
<keyword id="KW-0449">Lipoprotein</keyword>
<keyword id="KW-0472">Membrane</keyword>
<keyword id="KW-0479">Metal-binding</keyword>
<keyword id="KW-0519">Myristate</keyword>
<keyword id="KW-1185">Reference proteome</keyword>
<keyword id="KW-0677">Repeat</keyword>
<keyword id="KW-0770">Synapse</keyword>
<comment type="function">
    <text evidence="1">Neuronal calcium sensor, regulator of G protein-coupled receptor phosphorylation in a calcium dependent manner. Directly regulates GRK1 (RHOK), but not GRK2 to GRK5. Can substitute for calmodulin (By similarity).</text>
</comment>
<comment type="subcellular location">
    <subcellularLocation>
        <location evidence="2">Golgi apparatus</location>
    </subcellularLocation>
    <subcellularLocation>
        <location evidence="2">Postsynaptic density</location>
    </subcellularLocation>
    <subcellularLocation>
        <location evidence="2">Cytoplasm</location>
        <location evidence="2">Perinuclear region</location>
    </subcellularLocation>
    <subcellularLocation>
        <location evidence="3">Cytoplasm</location>
    </subcellularLocation>
    <subcellularLocation>
        <location evidence="2">Cell membrane</location>
        <topology evidence="2">Peripheral membrane protein</topology>
    </subcellularLocation>
    <subcellularLocation>
        <location evidence="3">Membrane</location>
        <topology evidence="2">Lipid-anchor</topology>
    </subcellularLocation>
</comment>
<comment type="tissue specificity">
    <text>Brain.</text>
</comment>
<comment type="developmental stage">
    <text>Is not detectable until stage 21, when spinal neurons begin to establish synaptic contacts with muscle cells, levels increase dramatically around stage 40.</text>
</comment>
<comment type="miscellaneous">
    <text evidence="1">Binds 3 calcium ions via the second, third and fourth EF-hand.</text>
</comment>
<comment type="similarity">
    <text evidence="5">Belongs to the recoverin family.</text>
</comment>
<proteinExistence type="evidence at transcript level"/>
<organism>
    <name type="scientific">Xenopus laevis</name>
    <name type="common">African clawed frog</name>
    <dbReference type="NCBI Taxonomy" id="8355"/>
    <lineage>
        <taxon>Eukaryota</taxon>
        <taxon>Metazoa</taxon>
        <taxon>Chordata</taxon>
        <taxon>Craniata</taxon>
        <taxon>Vertebrata</taxon>
        <taxon>Euteleostomi</taxon>
        <taxon>Amphibia</taxon>
        <taxon>Batrachia</taxon>
        <taxon>Anura</taxon>
        <taxon>Pipoidea</taxon>
        <taxon>Pipidae</taxon>
        <taxon>Xenopodinae</taxon>
        <taxon>Xenopus</taxon>
        <taxon>Xenopus</taxon>
    </lineage>
</organism>
<feature type="initiator methionine" description="Removed" evidence="1">
    <location>
        <position position="1"/>
    </location>
</feature>
<feature type="chain" id="PRO_0000073792" description="Neuronal calcium sensor 1">
    <location>
        <begin position="2"/>
        <end position="190"/>
    </location>
</feature>
<feature type="domain" description="EF-hand 1" evidence="5">
    <location>
        <begin position="24"/>
        <end position="59"/>
    </location>
</feature>
<feature type="domain" description="EF-hand 2" evidence="4">
    <location>
        <begin position="60"/>
        <end position="95"/>
    </location>
</feature>
<feature type="domain" description="EF-hand 3" evidence="4">
    <location>
        <begin position="96"/>
        <end position="131"/>
    </location>
</feature>
<feature type="domain" description="EF-hand 4" evidence="4">
    <location>
        <begin position="144"/>
        <end position="179"/>
    </location>
</feature>
<feature type="binding site" evidence="4">
    <location>
        <position position="73"/>
    </location>
    <ligand>
        <name>Ca(2+)</name>
        <dbReference type="ChEBI" id="CHEBI:29108"/>
        <label>1</label>
    </ligand>
</feature>
<feature type="binding site" evidence="4">
    <location>
        <position position="75"/>
    </location>
    <ligand>
        <name>Ca(2+)</name>
        <dbReference type="ChEBI" id="CHEBI:29108"/>
        <label>1</label>
    </ligand>
</feature>
<feature type="binding site" evidence="4">
    <location>
        <position position="77"/>
    </location>
    <ligand>
        <name>Ca(2+)</name>
        <dbReference type="ChEBI" id="CHEBI:29108"/>
        <label>1</label>
    </ligand>
</feature>
<feature type="binding site" evidence="4">
    <location>
        <position position="79"/>
    </location>
    <ligand>
        <name>Ca(2+)</name>
        <dbReference type="ChEBI" id="CHEBI:29108"/>
        <label>1</label>
    </ligand>
</feature>
<feature type="binding site" evidence="4">
    <location>
        <position position="84"/>
    </location>
    <ligand>
        <name>Ca(2+)</name>
        <dbReference type="ChEBI" id="CHEBI:29108"/>
        <label>1</label>
    </ligand>
</feature>
<feature type="binding site" evidence="4">
    <location>
        <position position="109"/>
    </location>
    <ligand>
        <name>Ca(2+)</name>
        <dbReference type="ChEBI" id="CHEBI:29108"/>
        <label>2</label>
    </ligand>
</feature>
<feature type="binding site" evidence="4">
    <location>
        <position position="111"/>
    </location>
    <ligand>
        <name>Ca(2+)</name>
        <dbReference type="ChEBI" id="CHEBI:29108"/>
        <label>2</label>
    </ligand>
</feature>
<feature type="binding site" evidence="4">
    <location>
        <position position="113"/>
    </location>
    <ligand>
        <name>Ca(2+)</name>
        <dbReference type="ChEBI" id="CHEBI:29108"/>
        <label>2</label>
    </ligand>
</feature>
<feature type="binding site" evidence="4">
    <location>
        <position position="115"/>
    </location>
    <ligand>
        <name>Ca(2+)</name>
        <dbReference type="ChEBI" id="CHEBI:29108"/>
        <label>2</label>
    </ligand>
</feature>
<feature type="binding site" evidence="4">
    <location>
        <position position="120"/>
    </location>
    <ligand>
        <name>Ca(2+)</name>
        <dbReference type="ChEBI" id="CHEBI:29108"/>
        <label>2</label>
    </ligand>
</feature>
<feature type="binding site" evidence="4">
    <location>
        <position position="157"/>
    </location>
    <ligand>
        <name>Ca(2+)</name>
        <dbReference type="ChEBI" id="CHEBI:29108"/>
        <label>3</label>
    </ligand>
</feature>
<feature type="binding site">
    <location>
        <position position="159"/>
    </location>
    <ligand>
        <name>Ca(2+)</name>
        <dbReference type="ChEBI" id="CHEBI:29108"/>
        <label>3</label>
    </ligand>
</feature>
<feature type="binding site" evidence="4">
    <location>
        <position position="161"/>
    </location>
    <ligand>
        <name>Ca(2+)</name>
        <dbReference type="ChEBI" id="CHEBI:29108"/>
        <label>3</label>
    </ligand>
</feature>
<feature type="binding site" evidence="4">
    <location>
        <position position="163"/>
    </location>
    <ligand>
        <name>Ca(2+)</name>
        <dbReference type="ChEBI" id="CHEBI:29108"/>
        <label>3</label>
    </ligand>
</feature>
<feature type="binding site" evidence="4">
    <location>
        <position position="168"/>
    </location>
    <ligand>
        <name>Ca(2+)</name>
        <dbReference type="ChEBI" id="CHEBI:29108"/>
        <label>3</label>
    </ligand>
</feature>
<feature type="lipid moiety-binding region" description="N-myristoyl glycine" evidence="1">
    <location>
        <position position="2"/>
    </location>
</feature>
<sequence length="190" mass="21925">MGKSNSKLKPEVVEELTRKTYFTEKEVQQWYKGFIKDCPSGQLDATGFQKIYKQFFPFGDPTKFATFVFNVFDENKDGRIEFSEFIQALSVTSRGTLDEKLRWAFKLYDLDNDGYITRNEMLDIVDAIYQMVGNTVELPEEENTPEKRVDRIFAMMDKNSDGKLTLQEFQEGSKADPSIVQALSLYDGLV</sequence>
<gene>
    <name type="primary">ncs1</name>
    <name type="synonym">freq</name>
</gene>
<reference key="1">
    <citation type="journal article" date="1995" name="Proc. Natl. Acad. Sci. U.S.A.">
        <title>Molecular cloning and functional characterization of the Xenopus Ca(2+)-binding protein frequenin.</title>
        <authorList>
            <person name="Olafsson P."/>
            <person name="Wang T."/>
            <person name="Lu B."/>
        </authorList>
    </citation>
    <scope>NUCLEOTIDE SEQUENCE [MRNA]</scope>
    <source>
        <tissue>Brain</tissue>
    </source>
</reference>
<reference key="2">
    <citation type="submission" date="2004-06" db="EMBL/GenBank/DDBJ databases">
        <authorList>
            <consortium name="NIH - Xenopus Gene Collection (XGC) project"/>
        </authorList>
    </citation>
    <scope>NUCLEOTIDE SEQUENCE [LARGE SCALE MRNA]</scope>
    <source>
        <tissue>Ovary</tissue>
    </source>
</reference>
<name>NCS1_XENLA</name>
<protein>
    <recommendedName>
        <fullName>Neuronal calcium sensor 1</fullName>
        <shortName>NCS-1</shortName>
    </recommendedName>
    <alternativeName>
        <fullName>Frequenin</fullName>
    </alternativeName>
</protein>
<evidence type="ECO:0000250" key="1"/>
<evidence type="ECO:0000250" key="2">
    <source>
        <dbReference type="UniProtKB" id="P62166"/>
    </source>
</evidence>
<evidence type="ECO:0000250" key="3">
    <source>
        <dbReference type="UniProtKB" id="P62168"/>
    </source>
</evidence>
<evidence type="ECO:0000255" key="4">
    <source>
        <dbReference type="PROSITE-ProRule" id="PRU00448"/>
    </source>
</evidence>
<evidence type="ECO:0000305" key="5"/>